<reference key="1">
    <citation type="journal article" date="2009" name="PLoS ONE">
        <title>Salmonella paratyphi C: genetic divergence from Salmonella choleraesuis and pathogenic convergence with Salmonella typhi.</title>
        <authorList>
            <person name="Liu W.-Q."/>
            <person name="Feng Y."/>
            <person name="Wang Y."/>
            <person name="Zou Q.-H."/>
            <person name="Chen F."/>
            <person name="Guo J.-T."/>
            <person name="Peng Y.-H."/>
            <person name="Jin Y."/>
            <person name="Li Y.-G."/>
            <person name="Hu S.-N."/>
            <person name="Johnston R.N."/>
            <person name="Liu G.-R."/>
            <person name="Liu S.-L."/>
        </authorList>
    </citation>
    <scope>NUCLEOTIDE SEQUENCE [LARGE SCALE GENOMIC DNA]</scope>
    <source>
        <strain>RKS4594</strain>
    </source>
</reference>
<organism>
    <name type="scientific">Salmonella paratyphi C (strain RKS4594)</name>
    <dbReference type="NCBI Taxonomy" id="476213"/>
    <lineage>
        <taxon>Bacteria</taxon>
        <taxon>Pseudomonadati</taxon>
        <taxon>Pseudomonadota</taxon>
        <taxon>Gammaproteobacteria</taxon>
        <taxon>Enterobacterales</taxon>
        <taxon>Enterobacteriaceae</taxon>
        <taxon>Salmonella</taxon>
    </lineage>
</organism>
<protein>
    <recommendedName>
        <fullName evidence="1">tRNA modification GTPase MnmE</fullName>
        <ecNumber evidence="1">3.6.-.-</ecNumber>
    </recommendedName>
</protein>
<evidence type="ECO:0000255" key="1">
    <source>
        <dbReference type="HAMAP-Rule" id="MF_00379"/>
    </source>
</evidence>
<comment type="function">
    <text evidence="1">Exhibits a very high intrinsic GTPase hydrolysis rate. Involved in the addition of a carboxymethylaminomethyl (cmnm) group at the wobble position (U34) of certain tRNAs, forming tRNA-cmnm(5)s(2)U34.</text>
</comment>
<comment type="cofactor">
    <cofactor evidence="1">
        <name>K(+)</name>
        <dbReference type="ChEBI" id="CHEBI:29103"/>
    </cofactor>
    <text evidence="1">Binds 1 potassium ion per subunit.</text>
</comment>
<comment type="subunit">
    <text evidence="1">Homodimer. Heterotetramer of two MnmE and two MnmG subunits.</text>
</comment>
<comment type="subcellular location">
    <subcellularLocation>
        <location evidence="1">Cytoplasm</location>
    </subcellularLocation>
</comment>
<comment type="similarity">
    <text evidence="1">Belongs to the TRAFAC class TrmE-Era-EngA-EngB-Septin-like GTPase superfamily. TrmE GTPase family.</text>
</comment>
<name>MNME_SALPC</name>
<gene>
    <name evidence="1" type="primary">mnmE</name>
    <name evidence="1" type="synonym">trmE</name>
    <name type="ordered locus">SPC_3930</name>
</gene>
<proteinExistence type="inferred from homology"/>
<keyword id="KW-0963">Cytoplasm</keyword>
<keyword id="KW-0342">GTP-binding</keyword>
<keyword id="KW-0378">Hydrolase</keyword>
<keyword id="KW-0460">Magnesium</keyword>
<keyword id="KW-0479">Metal-binding</keyword>
<keyword id="KW-0547">Nucleotide-binding</keyword>
<keyword id="KW-0630">Potassium</keyword>
<keyword id="KW-0819">tRNA processing</keyword>
<accession>C0Q2L4</accession>
<dbReference type="EC" id="3.6.-.-" evidence="1"/>
<dbReference type="EMBL" id="CP000857">
    <property type="protein sequence ID" value="ACN48000.1"/>
    <property type="molecule type" value="Genomic_DNA"/>
</dbReference>
<dbReference type="RefSeq" id="WP_000019078.1">
    <property type="nucleotide sequence ID" value="NC_012125.1"/>
</dbReference>
<dbReference type="SMR" id="C0Q2L4"/>
<dbReference type="KEGG" id="sei:SPC_3930"/>
<dbReference type="HOGENOM" id="CLU_019624_4_1_6"/>
<dbReference type="Proteomes" id="UP000001599">
    <property type="component" value="Chromosome"/>
</dbReference>
<dbReference type="GO" id="GO:0005829">
    <property type="term" value="C:cytosol"/>
    <property type="evidence" value="ECO:0007669"/>
    <property type="project" value="TreeGrafter"/>
</dbReference>
<dbReference type="GO" id="GO:0005525">
    <property type="term" value="F:GTP binding"/>
    <property type="evidence" value="ECO:0007669"/>
    <property type="project" value="UniProtKB-UniRule"/>
</dbReference>
<dbReference type="GO" id="GO:0003924">
    <property type="term" value="F:GTPase activity"/>
    <property type="evidence" value="ECO:0007669"/>
    <property type="project" value="UniProtKB-UniRule"/>
</dbReference>
<dbReference type="GO" id="GO:0046872">
    <property type="term" value="F:metal ion binding"/>
    <property type="evidence" value="ECO:0007669"/>
    <property type="project" value="UniProtKB-KW"/>
</dbReference>
<dbReference type="GO" id="GO:0030488">
    <property type="term" value="P:tRNA methylation"/>
    <property type="evidence" value="ECO:0007669"/>
    <property type="project" value="TreeGrafter"/>
</dbReference>
<dbReference type="GO" id="GO:0002098">
    <property type="term" value="P:tRNA wobble uridine modification"/>
    <property type="evidence" value="ECO:0007669"/>
    <property type="project" value="TreeGrafter"/>
</dbReference>
<dbReference type="CDD" id="cd04164">
    <property type="entry name" value="trmE"/>
    <property type="match status" value="1"/>
</dbReference>
<dbReference type="CDD" id="cd14858">
    <property type="entry name" value="TrmE_N"/>
    <property type="match status" value="1"/>
</dbReference>
<dbReference type="FunFam" id="3.30.1360.120:FF:000001">
    <property type="entry name" value="tRNA modification GTPase MnmE"/>
    <property type="match status" value="1"/>
</dbReference>
<dbReference type="FunFam" id="3.40.50.300:FF:000249">
    <property type="entry name" value="tRNA modification GTPase MnmE"/>
    <property type="match status" value="1"/>
</dbReference>
<dbReference type="Gene3D" id="3.40.50.300">
    <property type="entry name" value="P-loop containing nucleotide triphosphate hydrolases"/>
    <property type="match status" value="1"/>
</dbReference>
<dbReference type="Gene3D" id="3.30.1360.120">
    <property type="entry name" value="Probable tRNA modification gtpase trme, domain 1"/>
    <property type="match status" value="1"/>
</dbReference>
<dbReference type="Gene3D" id="1.20.120.430">
    <property type="entry name" value="tRNA modification GTPase MnmE domain 2"/>
    <property type="match status" value="1"/>
</dbReference>
<dbReference type="HAMAP" id="MF_00379">
    <property type="entry name" value="GTPase_MnmE"/>
    <property type="match status" value="1"/>
</dbReference>
<dbReference type="InterPro" id="IPR031168">
    <property type="entry name" value="G_TrmE"/>
</dbReference>
<dbReference type="InterPro" id="IPR006073">
    <property type="entry name" value="GTP-bd"/>
</dbReference>
<dbReference type="InterPro" id="IPR018948">
    <property type="entry name" value="GTP-bd_TrmE_N"/>
</dbReference>
<dbReference type="InterPro" id="IPR004520">
    <property type="entry name" value="GTPase_MnmE"/>
</dbReference>
<dbReference type="InterPro" id="IPR027368">
    <property type="entry name" value="MnmE_dom2"/>
</dbReference>
<dbReference type="InterPro" id="IPR025867">
    <property type="entry name" value="MnmE_helical"/>
</dbReference>
<dbReference type="InterPro" id="IPR027417">
    <property type="entry name" value="P-loop_NTPase"/>
</dbReference>
<dbReference type="InterPro" id="IPR005225">
    <property type="entry name" value="Small_GTP-bd"/>
</dbReference>
<dbReference type="InterPro" id="IPR027266">
    <property type="entry name" value="TrmE/GcvT_dom1"/>
</dbReference>
<dbReference type="NCBIfam" id="TIGR00450">
    <property type="entry name" value="mnmE_trmE_thdF"/>
    <property type="match status" value="1"/>
</dbReference>
<dbReference type="NCBIfam" id="NF003661">
    <property type="entry name" value="PRK05291.1-3"/>
    <property type="match status" value="1"/>
</dbReference>
<dbReference type="NCBIfam" id="TIGR00231">
    <property type="entry name" value="small_GTP"/>
    <property type="match status" value="1"/>
</dbReference>
<dbReference type="PANTHER" id="PTHR42714">
    <property type="entry name" value="TRNA MODIFICATION GTPASE GTPBP3"/>
    <property type="match status" value="1"/>
</dbReference>
<dbReference type="PANTHER" id="PTHR42714:SF2">
    <property type="entry name" value="TRNA MODIFICATION GTPASE GTPBP3, MITOCHONDRIAL"/>
    <property type="match status" value="1"/>
</dbReference>
<dbReference type="Pfam" id="PF01926">
    <property type="entry name" value="MMR_HSR1"/>
    <property type="match status" value="1"/>
</dbReference>
<dbReference type="Pfam" id="PF12631">
    <property type="entry name" value="MnmE_helical"/>
    <property type="match status" value="1"/>
</dbReference>
<dbReference type="Pfam" id="PF10396">
    <property type="entry name" value="TrmE_N"/>
    <property type="match status" value="1"/>
</dbReference>
<dbReference type="SUPFAM" id="SSF52540">
    <property type="entry name" value="P-loop containing nucleoside triphosphate hydrolases"/>
    <property type="match status" value="1"/>
</dbReference>
<dbReference type="SUPFAM" id="SSF116878">
    <property type="entry name" value="TrmE connector domain"/>
    <property type="match status" value="1"/>
</dbReference>
<dbReference type="PROSITE" id="PS51709">
    <property type="entry name" value="G_TRME"/>
    <property type="match status" value="1"/>
</dbReference>
<feature type="chain" id="PRO_1000197063" description="tRNA modification GTPase MnmE">
    <location>
        <begin position="1"/>
        <end position="454"/>
    </location>
</feature>
<feature type="domain" description="TrmE-type G">
    <location>
        <begin position="216"/>
        <end position="377"/>
    </location>
</feature>
<feature type="binding site" evidence="1">
    <location>
        <position position="23"/>
    </location>
    <ligand>
        <name>(6S)-5-formyl-5,6,7,8-tetrahydrofolate</name>
        <dbReference type="ChEBI" id="CHEBI:57457"/>
    </ligand>
</feature>
<feature type="binding site" evidence="1">
    <location>
        <position position="80"/>
    </location>
    <ligand>
        <name>(6S)-5-formyl-5,6,7,8-tetrahydrofolate</name>
        <dbReference type="ChEBI" id="CHEBI:57457"/>
    </ligand>
</feature>
<feature type="binding site" evidence="1">
    <location>
        <position position="120"/>
    </location>
    <ligand>
        <name>(6S)-5-formyl-5,6,7,8-tetrahydrofolate</name>
        <dbReference type="ChEBI" id="CHEBI:57457"/>
    </ligand>
</feature>
<feature type="binding site" evidence="1">
    <location>
        <begin position="226"/>
        <end position="231"/>
    </location>
    <ligand>
        <name>GTP</name>
        <dbReference type="ChEBI" id="CHEBI:37565"/>
    </ligand>
</feature>
<feature type="binding site" evidence="1">
    <location>
        <position position="226"/>
    </location>
    <ligand>
        <name>K(+)</name>
        <dbReference type="ChEBI" id="CHEBI:29103"/>
    </ligand>
</feature>
<feature type="binding site" evidence="1">
    <location>
        <position position="230"/>
    </location>
    <ligand>
        <name>Mg(2+)</name>
        <dbReference type="ChEBI" id="CHEBI:18420"/>
    </ligand>
</feature>
<feature type="binding site" evidence="1">
    <location>
        <begin position="245"/>
        <end position="251"/>
    </location>
    <ligand>
        <name>GTP</name>
        <dbReference type="ChEBI" id="CHEBI:37565"/>
    </ligand>
</feature>
<feature type="binding site" evidence="1">
    <location>
        <position position="245"/>
    </location>
    <ligand>
        <name>K(+)</name>
        <dbReference type="ChEBI" id="CHEBI:29103"/>
    </ligand>
</feature>
<feature type="binding site" evidence="1">
    <location>
        <position position="247"/>
    </location>
    <ligand>
        <name>K(+)</name>
        <dbReference type="ChEBI" id="CHEBI:29103"/>
    </ligand>
</feature>
<feature type="binding site" evidence="1">
    <location>
        <position position="250"/>
    </location>
    <ligand>
        <name>K(+)</name>
        <dbReference type="ChEBI" id="CHEBI:29103"/>
    </ligand>
</feature>
<feature type="binding site" evidence="1">
    <location>
        <position position="251"/>
    </location>
    <ligand>
        <name>Mg(2+)</name>
        <dbReference type="ChEBI" id="CHEBI:18420"/>
    </ligand>
</feature>
<feature type="binding site" evidence="1">
    <location>
        <begin position="270"/>
        <end position="273"/>
    </location>
    <ligand>
        <name>GTP</name>
        <dbReference type="ChEBI" id="CHEBI:37565"/>
    </ligand>
</feature>
<feature type="binding site" evidence="1">
    <location>
        <begin position="335"/>
        <end position="338"/>
    </location>
    <ligand>
        <name>GTP</name>
        <dbReference type="ChEBI" id="CHEBI:37565"/>
    </ligand>
</feature>
<feature type="binding site" evidence="1">
    <location>
        <begin position="358"/>
        <end position="360"/>
    </location>
    <ligand>
        <name>GTP</name>
        <dbReference type="ChEBI" id="CHEBI:37565"/>
    </ligand>
</feature>
<feature type="binding site" evidence="1">
    <location>
        <position position="454"/>
    </location>
    <ligand>
        <name>(6S)-5-formyl-5,6,7,8-tetrahydrofolate</name>
        <dbReference type="ChEBI" id="CHEBI:57457"/>
    </ligand>
</feature>
<sequence>MSHNDTIVAQATPPGRGGVGILRISGLKARDVAQEVLGKLPKPRYADYLPFKDVDGSALDQGIALWFPGPNSFTGEDVLELQGHGGPVILDLLLKRILTLPGVRIARPGEFSERAFLNDKLDLAQAEAIADLIDASSEQAARSALNSLQGAFSARVNHLVEALTHLRIYVEAAIDFPDEEIDFLSDGKIEAQLNGVIADLDAVRTEARQGSLLREGMKVVIAGRPNAGKSSLLNALAGREAAIVTDIAGTTRDVLREHIHIDGMPLHIIDTAGLRDASDEVERIGIERAWQEIEQADRVLFMVDGTTTDAVDPADIWPDFIARLPKNLPITVVRNKADITGETLGISEVNGHSLVRLSARTGEGVDVLRNHLKQSMGFDINMEGGFLARRRHLQALAEAAEHLEQGKAQLLGAWAGELLAEELRLAQQSLSEITGEFTSDDLLGRIFSSFCIGK</sequence>